<name>ISPD_STRAW</name>
<feature type="chain" id="PRO_0000075629" description="2-C-methyl-D-erythritol 4-phosphate cytidylyltransferase">
    <location>
        <begin position="1"/>
        <end position="250"/>
    </location>
</feature>
<feature type="site" description="Transition state stabilizer" evidence="1">
    <location>
        <position position="26"/>
    </location>
</feature>
<feature type="site" description="Transition state stabilizer" evidence="1">
    <location>
        <position position="33"/>
    </location>
</feature>
<feature type="site" description="Positions MEP for the nucleophilic attack" evidence="1">
    <location>
        <position position="174"/>
    </location>
</feature>
<feature type="site" description="Positions MEP for the nucleophilic attack" evidence="1">
    <location>
        <position position="227"/>
    </location>
</feature>
<organism>
    <name type="scientific">Streptomyces avermitilis (strain ATCC 31267 / DSM 46492 / JCM 5070 / NBRC 14893 / NCIMB 12804 / NRRL 8165 / MA-4680)</name>
    <dbReference type="NCBI Taxonomy" id="227882"/>
    <lineage>
        <taxon>Bacteria</taxon>
        <taxon>Bacillati</taxon>
        <taxon>Actinomycetota</taxon>
        <taxon>Actinomycetes</taxon>
        <taxon>Kitasatosporales</taxon>
        <taxon>Streptomycetaceae</taxon>
        <taxon>Streptomyces</taxon>
    </lineage>
</organism>
<accession>Q82GC8</accession>
<sequence length="250" mass="26034">MSDDSRPSPSGARTAAVIPAAGRGVRLGPGAPKALRALNGTPMLIHAVRAMAASRAVSLVVVVAPPDGTAEVKSLLDAHALPERTDFVVVPGGESRQESVKLGLDALPPGIDIVLVHDAARPLVPVDTVDAVIEAVRDGAPAVVPALPLADTVKQVEPAAVPGEPEPVVATPERARLRAVQTPQGFDRDTLVRAHETVTDNVTDDASMVEQLGARVVVVPGHEEAFKVTRPLDLVLAEAVLARRRLNDGF</sequence>
<comment type="function">
    <text evidence="1">Catalyzes the formation of 4-diphosphocytidyl-2-C-methyl-D-erythritol from CTP and 2-C-methyl-D-erythritol 4-phosphate (MEP).</text>
</comment>
<comment type="catalytic activity">
    <reaction evidence="1">
        <text>2-C-methyl-D-erythritol 4-phosphate + CTP + H(+) = 4-CDP-2-C-methyl-D-erythritol + diphosphate</text>
        <dbReference type="Rhea" id="RHEA:13429"/>
        <dbReference type="ChEBI" id="CHEBI:15378"/>
        <dbReference type="ChEBI" id="CHEBI:33019"/>
        <dbReference type="ChEBI" id="CHEBI:37563"/>
        <dbReference type="ChEBI" id="CHEBI:57823"/>
        <dbReference type="ChEBI" id="CHEBI:58262"/>
        <dbReference type="EC" id="2.7.7.60"/>
    </reaction>
</comment>
<comment type="pathway">
    <text evidence="1">Isoprenoid biosynthesis; isopentenyl diphosphate biosynthesis via DXP pathway; isopentenyl diphosphate from 1-deoxy-D-xylulose 5-phosphate: step 2/6.</text>
</comment>
<comment type="similarity">
    <text evidence="1">Belongs to the IspD/TarI cytidylyltransferase family. IspD subfamily.</text>
</comment>
<dbReference type="EC" id="2.7.7.60" evidence="1"/>
<dbReference type="EMBL" id="BA000030">
    <property type="protein sequence ID" value="BAC71681.1"/>
    <property type="molecule type" value="Genomic_DNA"/>
</dbReference>
<dbReference type="RefSeq" id="WP_010985399.1">
    <property type="nucleotide sequence ID" value="NZ_JZJK01000060.1"/>
</dbReference>
<dbReference type="SMR" id="Q82GC8"/>
<dbReference type="GeneID" id="41541038"/>
<dbReference type="KEGG" id="sma:SAVERM_3969"/>
<dbReference type="eggNOG" id="COG1211">
    <property type="taxonomic scope" value="Bacteria"/>
</dbReference>
<dbReference type="HOGENOM" id="CLU_061281_1_0_11"/>
<dbReference type="OrthoDB" id="9802561at2"/>
<dbReference type="UniPathway" id="UPA00056">
    <property type="reaction ID" value="UER00093"/>
</dbReference>
<dbReference type="Proteomes" id="UP000000428">
    <property type="component" value="Chromosome"/>
</dbReference>
<dbReference type="GO" id="GO:0050518">
    <property type="term" value="F:2-C-methyl-D-erythritol 4-phosphate cytidylyltransferase activity"/>
    <property type="evidence" value="ECO:0007669"/>
    <property type="project" value="UniProtKB-UniRule"/>
</dbReference>
<dbReference type="GO" id="GO:0019288">
    <property type="term" value="P:isopentenyl diphosphate biosynthetic process, methylerythritol 4-phosphate pathway"/>
    <property type="evidence" value="ECO:0007669"/>
    <property type="project" value="UniProtKB-UniRule"/>
</dbReference>
<dbReference type="CDD" id="cd02516">
    <property type="entry name" value="CDP-ME_synthetase"/>
    <property type="match status" value="1"/>
</dbReference>
<dbReference type="FunFam" id="3.90.550.10:FF:000003">
    <property type="entry name" value="2-C-methyl-D-erythritol 4-phosphate cytidylyltransferase"/>
    <property type="match status" value="1"/>
</dbReference>
<dbReference type="Gene3D" id="3.90.550.10">
    <property type="entry name" value="Spore Coat Polysaccharide Biosynthesis Protein SpsA, Chain A"/>
    <property type="match status" value="1"/>
</dbReference>
<dbReference type="HAMAP" id="MF_00108">
    <property type="entry name" value="IspD"/>
    <property type="match status" value="1"/>
</dbReference>
<dbReference type="InterPro" id="IPR001228">
    <property type="entry name" value="IspD"/>
</dbReference>
<dbReference type="InterPro" id="IPR034683">
    <property type="entry name" value="IspD/TarI"/>
</dbReference>
<dbReference type="InterPro" id="IPR050088">
    <property type="entry name" value="IspD/TarI_cytidylyltransf_bact"/>
</dbReference>
<dbReference type="InterPro" id="IPR018294">
    <property type="entry name" value="ISPD_synthase_CS"/>
</dbReference>
<dbReference type="InterPro" id="IPR029044">
    <property type="entry name" value="Nucleotide-diphossugar_trans"/>
</dbReference>
<dbReference type="NCBIfam" id="TIGR00453">
    <property type="entry name" value="ispD"/>
    <property type="match status" value="1"/>
</dbReference>
<dbReference type="PANTHER" id="PTHR32125">
    <property type="entry name" value="2-C-METHYL-D-ERYTHRITOL 4-PHOSPHATE CYTIDYLYLTRANSFERASE, CHLOROPLASTIC"/>
    <property type="match status" value="1"/>
</dbReference>
<dbReference type="PANTHER" id="PTHR32125:SF4">
    <property type="entry name" value="2-C-METHYL-D-ERYTHRITOL 4-PHOSPHATE CYTIDYLYLTRANSFERASE, CHLOROPLASTIC"/>
    <property type="match status" value="1"/>
</dbReference>
<dbReference type="Pfam" id="PF01128">
    <property type="entry name" value="IspD"/>
    <property type="match status" value="1"/>
</dbReference>
<dbReference type="SUPFAM" id="SSF53448">
    <property type="entry name" value="Nucleotide-diphospho-sugar transferases"/>
    <property type="match status" value="1"/>
</dbReference>
<dbReference type="PROSITE" id="PS01295">
    <property type="entry name" value="ISPD"/>
    <property type="match status" value="1"/>
</dbReference>
<keyword id="KW-0414">Isoprene biosynthesis</keyword>
<keyword id="KW-0548">Nucleotidyltransferase</keyword>
<keyword id="KW-1185">Reference proteome</keyword>
<keyword id="KW-0808">Transferase</keyword>
<proteinExistence type="inferred from homology"/>
<gene>
    <name evidence="1" type="primary">ispD</name>
    <name type="ordered locus">SAV_3969</name>
</gene>
<protein>
    <recommendedName>
        <fullName evidence="1">2-C-methyl-D-erythritol 4-phosphate cytidylyltransferase</fullName>
        <ecNumber evidence="1">2.7.7.60</ecNumber>
    </recommendedName>
    <alternativeName>
        <fullName evidence="1">4-diphosphocytidyl-2C-methyl-D-erythritol synthase</fullName>
    </alternativeName>
    <alternativeName>
        <fullName evidence="1">MEP cytidylyltransferase</fullName>
        <shortName evidence="1">MCT</shortName>
    </alternativeName>
</protein>
<reference key="1">
    <citation type="journal article" date="2001" name="Proc. Natl. Acad. Sci. U.S.A.">
        <title>Genome sequence of an industrial microorganism Streptomyces avermitilis: deducing the ability of producing secondary metabolites.</title>
        <authorList>
            <person name="Omura S."/>
            <person name="Ikeda H."/>
            <person name="Ishikawa J."/>
            <person name="Hanamoto A."/>
            <person name="Takahashi C."/>
            <person name="Shinose M."/>
            <person name="Takahashi Y."/>
            <person name="Horikawa H."/>
            <person name="Nakazawa H."/>
            <person name="Osonoe T."/>
            <person name="Kikuchi H."/>
            <person name="Shiba T."/>
            <person name="Sakaki Y."/>
            <person name="Hattori M."/>
        </authorList>
    </citation>
    <scope>NUCLEOTIDE SEQUENCE [LARGE SCALE GENOMIC DNA]</scope>
    <source>
        <strain>ATCC 31267 / DSM 46492 / JCM 5070 / NBRC 14893 / NCIMB 12804 / NRRL 8165 / MA-4680</strain>
    </source>
</reference>
<reference key="2">
    <citation type="journal article" date="2003" name="Nat. Biotechnol.">
        <title>Complete genome sequence and comparative analysis of the industrial microorganism Streptomyces avermitilis.</title>
        <authorList>
            <person name="Ikeda H."/>
            <person name="Ishikawa J."/>
            <person name="Hanamoto A."/>
            <person name="Shinose M."/>
            <person name="Kikuchi H."/>
            <person name="Shiba T."/>
            <person name="Sakaki Y."/>
            <person name="Hattori M."/>
            <person name="Omura S."/>
        </authorList>
    </citation>
    <scope>NUCLEOTIDE SEQUENCE [LARGE SCALE GENOMIC DNA]</scope>
    <source>
        <strain>ATCC 31267 / DSM 46492 / JCM 5070 / NBRC 14893 / NCIMB 12804 / NRRL 8165 / MA-4680</strain>
    </source>
</reference>
<evidence type="ECO:0000255" key="1">
    <source>
        <dbReference type="HAMAP-Rule" id="MF_00108"/>
    </source>
</evidence>